<gene>
    <name evidence="1" type="primary">hisE</name>
    <name type="ordered locus">azo3342</name>
</gene>
<accession>A1KAV2</accession>
<proteinExistence type="inferred from homology"/>
<organism>
    <name type="scientific">Azoarcus sp. (strain BH72)</name>
    <dbReference type="NCBI Taxonomy" id="418699"/>
    <lineage>
        <taxon>Bacteria</taxon>
        <taxon>Pseudomonadati</taxon>
        <taxon>Pseudomonadota</taxon>
        <taxon>Betaproteobacteria</taxon>
        <taxon>Rhodocyclales</taxon>
        <taxon>Zoogloeaceae</taxon>
        <taxon>Azoarcus</taxon>
    </lineage>
</organism>
<comment type="catalytic activity">
    <reaction evidence="1">
        <text>1-(5-phospho-beta-D-ribosyl)-ATP + H2O = 1-(5-phospho-beta-D-ribosyl)-5'-AMP + diphosphate + H(+)</text>
        <dbReference type="Rhea" id="RHEA:22828"/>
        <dbReference type="ChEBI" id="CHEBI:15377"/>
        <dbReference type="ChEBI" id="CHEBI:15378"/>
        <dbReference type="ChEBI" id="CHEBI:33019"/>
        <dbReference type="ChEBI" id="CHEBI:59457"/>
        <dbReference type="ChEBI" id="CHEBI:73183"/>
        <dbReference type="EC" id="3.6.1.31"/>
    </reaction>
</comment>
<comment type="pathway">
    <text evidence="1">Amino-acid biosynthesis; L-histidine biosynthesis; L-histidine from 5-phospho-alpha-D-ribose 1-diphosphate: step 2/9.</text>
</comment>
<comment type="subcellular location">
    <subcellularLocation>
        <location evidence="1">Cytoplasm</location>
    </subcellularLocation>
</comment>
<comment type="similarity">
    <text evidence="1">Belongs to the PRA-PH family.</text>
</comment>
<sequence length="107" mass="12036">MIDIEVLHRVAATLAERKKADPDSSYVSSLYAKGTDAICKKVAEEAAETIMAAKDKDMLHIVWEVTDLWFHSMVLLSHFGLSVDDVLAEFRRREGVSGIDEKKSRKN</sequence>
<dbReference type="EC" id="3.6.1.31" evidence="1"/>
<dbReference type="EMBL" id="AM406670">
    <property type="protein sequence ID" value="CAL95958.1"/>
    <property type="molecule type" value="Genomic_DNA"/>
</dbReference>
<dbReference type="RefSeq" id="WP_011767065.1">
    <property type="nucleotide sequence ID" value="NC_008702.1"/>
</dbReference>
<dbReference type="SMR" id="A1KAV2"/>
<dbReference type="STRING" id="62928.azo3342"/>
<dbReference type="KEGG" id="aoa:dqs_3479"/>
<dbReference type="KEGG" id="azo:azo3342"/>
<dbReference type="eggNOG" id="COG0140">
    <property type="taxonomic scope" value="Bacteria"/>
</dbReference>
<dbReference type="HOGENOM" id="CLU_123337_1_2_4"/>
<dbReference type="OrthoDB" id="9814738at2"/>
<dbReference type="UniPathway" id="UPA00031">
    <property type="reaction ID" value="UER00007"/>
</dbReference>
<dbReference type="Proteomes" id="UP000002588">
    <property type="component" value="Chromosome"/>
</dbReference>
<dbReference type="GO" id="GO:0005737">
    <property type="term" value="C:cytoplasm"/>
    <property type="evidence" value="ECO:0007669"/>
    <property type="project" value="UniProtKB-SubCell"/>
</dbReference>
<dbReference type="GO" id="GO:0005524">
    <property type="term" value="F:ATP binding"/>
    <property type="evidence" value="ECO:0007669"/>
    <property type="project" value="UniProtKB-KW"/>
</dbReference>
<dbReference type="GO" id="GO:0004636">
    <property type="term" value="F:phosphoribosyl-ATP diphosphatase activity"/>
    <property type="evidence" value="ECO:0007669"/>
    <property type="project" value="UniProtKB-UniRule"/>
</dbReference>
<dbReference type="GO" id="GO:0000105">
    <property type="term" value="P:L-histidine biosynthetic process"/>
    <property type="evidence" value="ECO:0007669"/>
    <property type="project" value="UniProtKB-UniRule"/>
</dbReference>
<dbReference type="CDD" id="cd11534">
    <property type="entry name" value="NTP-PPase_HisIE_like"/>
    <property type="match status" value="1"/>
</dbReference>
<dbReference type="FunFam" id="1.10.287.1080:FF:000002">
    <property type="entry name" value="Histidine biosynthesis bifunctional protein HisIE"/>
    <property type="match status" value="1"/>
</dbReference>
<dbReference type="Gene3D" id="1.10.287.1080">
    <property type="entry name" value="MazG-like"/>
    <property type="match status" value="1"/>
</dbReference>
<dbReference type="HAMAP" id="MF_01020">
    <property type="entry name" value="HisE"/>
    <property type="match status" value="1"/>
</dbReference>
<dbReference type="InterPro" id="IPR008179">
    <property type="entry name" value="HisE"/>
</dbReference>
<dbReference type="InterPro" id="IPR021130">
    <property type="entry name" value="PRib-ATP_PPHydrolase-like"/>
</dbReference>
<dbReference type="NCBIfam" id="TIGR03188">
    <property type="entry name" value="histidine_hisI"/>
    <property type="match status" value="1"/>
</dbReference>
<dbReference type="NCBIfam" id="NF001611">
    <property type="entry name" value="PRK00400.1-3"/>
    <property type="match status" value="1"/>
</dbReference>
<dbReference type="PANTHER" id="PTHR42945">
    <property type="entry name" value="HISTIDINE BIOSYNTHESIS BIFUNCTIONAL PROTEIN"/>
    <property type="match status" value="1"/>
</dbReference>
<dbReference type="PANTHER" id="PTHR42945:SF9">
    <property type="entry name" value="HISTIDINE BIOSYNTHESIS BIFUNCTIONAL PROTEIN HISIE"/>
    <property type="match status" value="1"/>
</dbReference>
<dbReference type="Pfam" id="PF01503">
    <property type="entry name" value="PRA-PH"/>
    <property type="match status" value="1"/>
</dbReference>
<dbReference type="SUPFAM" id="SSF101386">
    <property type="entry name" value="all-alpha NTP pyrophosphatases"/>
    <property type="match status" value="1"/>
</dbReference>
<feature type="chain" id="PRO_1000063322" description="Phosphoribosyl-ATP pyrophosphatase">
    <location>
        <begin position="1"/>
        <end position="107"/>
    </location>
</feature>
<name>HIS2_AZOSB</name>
<protein>
    <recommendedName>
        <fullName evidence="1">Phosphoribosyl-ATP pyrophosphatase</fullName>
        <shortName evidence="1">PRA-PH</shortName>
        <ecNumber evidence="1">3.6.1.31</ecNumber>
    </recommendedName>
</protein>
<evidence type="ECO:0000255" key="1">
    <source>
        <dbReference type="HAMAP-Rule" id="MF_01020"/>
    </source>
</evidence>
<reference key="1">
    <citation type="journal article" date="2006" name="Nat. Biotechnol.">
        <title>Complete genome of the mutualistic, N2-fixing grass endophyte Azoarcus sp. strain BH72.</title>
        <authorList>
            <person name="Krause A."/>
            <person name="Ramakumar A."/>
            <person name="Bartels D."/>
            <person name="Battistoni F."/>
            <person name="Bekel T."/>
            <person name="Boch J."/>
            <person name="Boehm M."/>
            <person name="Friedrich F."/>
            <person name="Hurek T."/>
            <person name="Krause L."/>
            <person name="Linke B."/>
            <person name="McHardy A.C."/>
            <person name="Sarkar A."/>
            <person name="Schneiker S."/>
            <person name="Syed A.A."/>
            <person name="Thauer R."/>
            <person name="Vorhoelter F.-J."/>
            <person name="Weidner S."/>
            <person name="Puehler A."/>
            <person name="Reinhold-Hurek B."/>
            <person name="Kaiser O."/>
            <person name="Goesmann A."/>
        </authorList>
    </citation>
    <scope>NUCLEOTIDE SEQUENCE [LARGE SCALE GENOMIC DNA]</scope>
    <source>
        <strain>BH72</strain>
    </source>
</reference>
<keyword id="KW-0028">Amino-acid biosynthesis</keyword>
<keyword id="KW-0067">ATP-binding</keyword>
<keyword id="KW-0963">Cytoplasm</keyword>
<keyword id="KW-0368">Histidine biosynthesis</keyword>
<keyword id="KW-0378">Hydrolase</keyword>
<keyword id="KW-0547">Nucleotide-binding</keyword>
<keyword id="KW-1185">Reference proteome</keyword>